<proteinExistence type="inferred from homology"/>
<organism>
    <name type="scientific">Pasteurella multocida (strain Pm70)</name>
    <dbReference type="NCBI Taxonomy" id="272843"/>
    <lineage>
        <taxon>Bacteria</taxon>
        <taxon>Pseudomonadati</taxon>
        <taxon>Pseudomonadota</taxon>
        <taxon>Gammaproteobacteria</taxon>
        <taxon>Pasteurellales</taxon>
        <taxon>Pasteurellaceae</taxon>
        <taxon>Pasteurella</taxon>
    </lineage>
</organism>
<name>HFLD_PASMU</name>
<reference key="1">
    <citation type="journal article" date="2001" name="Proc. Natl. Acad. Sci. U.S.A.">
        <title>Complete genomic sequence of Pasteurella multocida Pm70.</title>
        <authorList>
            <person name="May B.J."/>
            <person name="Zhang Q."/>
            <person name="Li L.L."/>
            <person name="Paustian M.L."/>
            <person name="Whittam T.S."/>
            <person name="Kapur V."/>
        </authorList>
    </citation>
    <scope>NUCLEOTIDE SEQUENCE [LARGE SCALE GENOMIC DNA]</scope>
    <source>
        <strain>Pm70</strain>
    </source>
</reference>
<feature type="chain" id="PRO_0000071581" description="High frequency lysogenization protein HflD homolog">
    <location>
        <begin position="1"/>
        <end position="203"/>
    </location>
</feature>
<protein>
    <recommendedName>
        <fullName evidence="1">High frequency lysogenization protein HflD homolog</fullName>
    </recommendedName>
</protein>
<comment type="subcellular location">
    <subcellularLocation>
        <location>Cytoplasm</location>
    </subcellularLocation>
    <subcellularLocation>
        <location evidence="1">Cell inner membrane</location>
        <topology evidence="1">Peripheral membrane protein</topology>
        <orientation evidence="1">Cytoplasmic side</orientation>
    </subcellularLocation>
</comment>
<comment type="similarity">
    <text evidence="1">Belongs to the HflD family.</text>
</comment>
<evidence type="ECO:0000255" key="1">
    <source>
        <dbReference type="HAMAP-Rule" id="MF_00695"/>
    </source>
</evidence>
<sequence length="203" mass="22717">MANYYDITLALAGVCQAAKLVQQFAHEGQADQAAFETSLNTLLQIYPEDTLAVFGGKAQNLKLGLETLLEQMHGTGSDLSRYWISLLALESKLNKDPHAKAELARRIQYLPTQLEHYDLLDEQMLSTLASIYVDVISPLGKKIQVTGSTLYLQQLAMHHRIRACLLAGIRSAVLWRQVGGTKWQVLFSRRKIIAMAKQIYSSL</sequence>
<accession>Q9CJY8</accession>
<gene>
    <name evidence="1" type="primary">hflD</name>
    <name type="ordered locus">PM1850</name>
</gene>
<keyword id="KW-0997">Cell inner membrane</keyword>
<keyword id="KW-1003">Cell membrane</keyword>
<keyword id="KW-0963">Cytoplasm</keyword>
<keyword id="KW-0472">Membrane</keyword>
<keyword id="KW-1185">Reference proteome</keyword>
<dbReference type="EMBL" id="AE004439">
    <property type="protein sequence ID" value="AAK03934.1"/>
    <property type="molecule type" value="Genomic_DNA"/>
</dbReference>
<dbReference type="RefSeq" id="WP_005724902.1">
    <property type="nucleotide sequence ID" value="NC_002663.1"/>
</dbReference>
<dbReference type="SMR" id="Q9CJY8"/>
<dbReference type="STRING" id="272843.PM1850"/>
<dbReference type="EnsemblBacteria" id="AAK03934">
    <property type="protein sequence ID" value="AAK03934"/>
    <property type="gene ID" value="PM1850"/>
</dbReference>
<dbReference type="KEGG" id="pmu:PM1850"/>
<dbReference type="PATRIC" id="fig|272843.6.peg.1872"/>
<dbReference type="HOGENOM" id="CLU_098920_0_0_6"/>
<dbReference type="OrthoDB" id="9788031at2"/>
<dbReference type="Proteomes" id="UP000000809">
    <property type="component" value="Chromosome"/>
</dbReference>
<dbReference type="GO" id="GO:0005737">
    <property type="term" value="C:cytoplasm"/>
    <property type="evidence" value="ECO:0007669"/>
    <property type="project" value="UniProtKB-SubCell"/>
</dbReference>
<dbReference type="GO" id="GO:0005886">
    <property type="term" value="C:plasma membrane"/>
    <property type="evidence" value="ECO:0007669"/>
    <property type="project" value="UniProtKB-SubCell"/>
</dbReference>
<dbReference type="Gene3D" id="1.10.3890.10">
    <property type="entry name" value="HflD-like"/>
    <property type="match status" value="1"/>
</dbReference>
<dbReference type="HAMAP" id="MF_00695">
    <property type="entry name" value="HflD_protein"/>
    <property type="match status" value="1"/>
</dbReference>
<dbReference type="InterPro" id="IPR007451">
    <property type="entry name" value="HflD"/>
</dbReference>
<dbReference type="InterPro" id="IPR035932">
    <property type="entry name" value="HflD-like_sf"/>
</dbReference>
<dbReference type="NCBIfam" id="NF001246">
    <property type="entry name" value="PRK00218.1-2"/>
    <property type="match status" value="1"/>
</dbReference>
<dbReference type="NCBIfam" id="NF001248">
    <property type="entry name" value="PRK00218.1-4"/>
    <property type="match status" value="1"/>
</dbReference>
<dbReference type="PANTHER" id="PTHR38100">
    <property type="entry name" value="HIGH FREQUENCY LYSOGENIZATION PROTEIN HFLD"/>
    <property type="match status" value="1"/>
</dbReference>
<dbReference type="PANTHER" id="PTHR38100:SF1">
    <property type="entry name" value="HIGH FREQUENCY LYSOGENIZATION PROTEIN HFLD"/>
    <property type="match status" value="1"/>
</dbReference>
<dbReference type="Pfam" id="PF04356">
    <property type="entry name" value="DUF489"/>
    <property type="match status" value="1"/>
</dbReference>
<dbReference type="SUPFAM" id="SSF101322">
    <property type="entry name" value="YcfC-like"/>
    <property type="match status" value="1"/>
</dbReference>